<dbReference type="EMBL" id="M12693">
    <property type="protein sequence ID" value="AAA29195.1"/>
    <property type="molecule type" value="mRNA"/>
</dbReference>
<dbReference type="PIR" id="A37417">
    <property type="entry name" value="A37417"/>
</dbReference>
<dbReference type="PDB" id="1A2C">
    <property type="method" value="X-ray"/>
    <property type="resolution" value="2.10 A"/>
    <property type="chains" value="I=60-71"/>
</dbReference>
<dbReference type="PDB" id="1A46">
    <property type="method" value="X-ray"/>
    <property type="resolution" value="2.12 A"/>
    <property type="chains" value="I=60-71"/>
</dbReference>
<dbReference type="PDB" id="1A4W">
    <property type="method" value="X-ray"/>
    <property type="resolution" value="1.80 A"/>
    <property type="chains" value="I=60-71"/>
</dbReference>
<dbReference type="PDB" id="1A5G">
    <property type="method" value="X-ray"/>
    <property type="resolution" value="2.06 A"/>
    <property type="chains" value="I=60-71"/>
</dbReference>
<dbReference type="PDB" id="1A61">
    <property type="method" value="X-ray"/>
    <property type="resolution" value="2.20 A"/>
    <property type="chains" value="I=60-71"/>
</dbReference>
<dbReference type="PDB" id="1B5G">
    <property type="method" value="X-ray"/>
    <property type="resolution" value="2.07 A"/>
    <property type="chains" value="I=60-71"/>
</dbReference>
<dbReference type="PDB" id="1DOJ">
    <property type="method" value="X-ray"/>
    <property type="resolution" value="1.70 A"/>
    <property type="chains" value="B=62-72"/>
</dbReference>
<dbReference type="PDB" id="1K21">
    <property type="method" value="X-ray"/>
    <property type="resolution" value="1.86 A"/>
    <property type="chains" value="I=60-71"/>
</dbReference>
<dbReference type="PDB" id="1K22">
    <property type="method" value="X-ray"/>
    <property type="resolution" value="1.93 A"/>
    <property type="chains" value="I=60-71"/>
</dbReference>
<dbReference type="PDB" id="1NRS">
    <property type="method" value="X-ray"/>
    <property type="resolution" value="2.40 A"/>
    <property type="chains" value="I=60-71"/>
</dbReference>
<dbReference type="PDB" id="1TMB">
    <property type="method" value="X-ray"/>
    <property type="resolution" value="2.30 A"/>
    <property type="chains" value="I=60-71"/>
</dbReference>
<dbReference type="PDB" id="1TMU">
    <property type="method" value="X-ray"/>
    <property type="resolution" value="2.50 A"/>
    <property type="chains" value="J=62-72"/>
</dbReference>
<dbReference type="PDB" id="1VZQ">
    <property type="method" value="X-ray"/>
    <property type="resolution" value="1.54 A"/>
    <property type="chains" value="I=62-72"/>
</dbReference>
<dbReference type="PDB" id="1W7G">
    <property type="method" value="X-ray"/>
    <property type="resolution" value="1.65 A"/>
    <property type="chains" value="I=60-71"/>
</dbReference>
<dbReference type="PDB" id="1WAY">
    <property type="method" value="X-ray"/>
    <property type="resolution" value="2.02 A"/>
    <property type="chains" value="I=62-71"/>
</dbReference>
<dbReference type="PDB" id="2BVR">
    <property type="method" value="X-ray"/>
    <property type="resolution" value="1.25 A"/>
    <property type="chains" value="I=61-70"/>
</dbReference>
<dbReference type="PDB" id="2BVS">
    <property type="method" value="X-ray"/>
    <property type="resolution" value="1.40 A"/>
    <property type="chains" value="I=61-71"/>
</dbReference>
<dbReference type="PDB" id="2BVX">
    <property type="method" value="X-ray"/>
    <property type="resolution" value="3.20 A"/>
    <property type="chains" value="I=61-71"/>
</dbReference>
<dbReference type="PDB" id="2BXT">
    <property type="method" value="X-ray"/>
    <property type="resolution" value="1.83 A"/>
    <property type="chains" value="I=61-71"/>
</dbReference>
<dbReference type="PDB" id="2BXU">
    <property type="method" value="X-ray"/>
    <property type="resolution" value="2.80 A"/>
    <property type="chains" value="I=61-71"/>
</dbReference>
<dbReference type="PDB" id="2C8W">
    <property type="method" value="X-ray"/>
    <property type="resolution" value="1.96 A"/>
    <property type="chains" value="I=61-72"/>
</dbReference>
<dbReference type="PDB" id="2C8X">
    <property type="method" value="X-ray"/>
    <property type="resolution" value="2.17 A"/>
    <property type="chains" value="I=61-72"/>
</dbReference>
<dbReference type="PDB" id="2C8Y">
    <property type="method" value="X-ray"/>
    <property type="resolution" value="2.20 A"/>
    <property type="chains" value="I=61-72"/>
</dbReference>
<dbReference type="PDB" id="2C8Z">
    <property type="method" value="X-ray"/>
    <property type="resolution" value="2.14 A"/>
    <property type="chains" value="I=61-72"/>
</dbReference>
<dbReference type="PDB" id="2C90">
    <property type="method" value="X-ray"/>
    <property type="resolution" value="2.25 A"/>
    <property type="chains" value="I=61-72"/>
</dbReference>
<dbReference type="PDB" id="2C93">
    <property type="method" value="X-ray"/>
    <property type="resolution" value="2.20 A"/>
    <property type="chains" value="I=61-72"/>
</dbReference>
<dbReference type="PDB" id="2R2M">
    <property type="method" value="X-ray"/>
    <property type="resolution" value="2.10 A"/>
    <property type="chains" value="H=62-72"/>
</dbReference>
<dbReference type="PDB" id="2ZFQ">
    <property type="method" value="X-ray"/>
    <property type="resolution" value="1.80 A"/>
    <property type="chains" value="I=60-71"/>
</dbReference>
<dbReference type="PDB" id="2ZFR">
    <property type="method" value="X-ray"/>
    <property type="resolution" value="1.85 A"/>
    <property type="chains" value="I=60-71"/>
</dbReference>
<dbReference type="PDB" id="2ZG0">
    <property type="method" value="X-ray"/>
    <property type="resolution" value="1.75 A"/>
    <property type="chains" value="I=60-71"/>
</dbReference>
<dbReference type="PDB" id="2ZHE">
    <property type="method" value="X-ray"/>
    <property type="resolution" value="2.10 A"/>
    <property type="chains" value="I=60-71"/>
</dbReference>
<dbReference type="PDB" id="2ZHF">
    <property type="method" value="X-ray"/>
    <property type="resolution" value="1.98 A"/>
    <property type="chains" value="I=60-71"/>
</dbReference>
<dbReference type="PDB" id="2ZHW">
    <property type="method" value="X-ray"/>
    <property type="resolution" value="2.02 A"/>
    <property type="chains" value="I=60-71"/>
</dbReference>
<dbReference type="PDB" id="3BIU">
    <property type="method" value="X-ray"/>
    <property type="resolution" value="2.30 A"/>
    <property type="chains" value="I=60-71"/>
</dbReference>
<dbReference type="PDB" id="3BIV">
    <property type="method" value="X-ray"/>
    <property type="resolution" value="1.80 A"/>
    <property type="chains" value="I=60-71"/>
</dbReference>
<dbReference type="PDB" id="3F68">
    <property type="method" value="X-ray"/>
    <property type="resolution" value="1.75 A"/>
    <property type="chains" value="I=61-71"/>
</dbReference>
<dbReference type="PDB" id="3HAT">
    <property type="method" value="X-ray"/>
    <property type="resolution" value="2.50 A"/>
    <property type="chains" value="I=60-71"/>
</dbReference>
<dbReference type="PDB" id="3HTC">
    <property type="method" value="X-ray"/>
    <property type="resolution" value="2.30 A"/>
    <property type="chains" value="I=8-72"/>
</dbReference>
<dbReference type="PDB" id="3P17">
    <property type="method" value="X-ray"/>
    <property type="resolution" value="1.43 A"/>
    <property type="chains" value="I=60-71"/>
</dbReference>
<dbReference type="PDB" id="3QTO">
    <property type="method" value="X-ray"/>
    <property type="resolution" value="1.52 A"/>
    <property type="chains" value="I=60-72"/>
</dbReference>
<dbReference type="PDB" id="3QTV">
    <property type="method" value="X-ray"/>
    <property type="resolution" value="1.63 A"/>
    <property type="chains" value="I=60-72"/>
</dbReference>
<dbReference type="PDB" id="3QWC">
    <property type="method" value="X-ray"/>
    <property type="resolution" value="1.75 A"/>
    <property type="chains" value="I=60-72"/>
</dbReference>
<dbReference type="PDB" id="3QX5">
    <property type="method" value="X-ray"/>
    <property type="resolution" value="1.35 A"/>
    <property type="chains" value="I=60-72"/>
</dbReference>
<dbReference type="PDB" id="3RLW">
    <property type="method" value="X-ray"/>
    <property type="resolution" value="1.69 A"/>
    <property type="chains" value="I=60-72"/>
</dbReference>
<dbReference type="PDB" id="3RLY">
    <property type="method" value="X-ray"/>
    <property type="resolution" value="1.51 A"/>
    <property type="chains" value="I=60-72"/>
</dbReference>
<dbReference type="PDB" id="3RM0">
    <property type="method" value="X-ray"/>
    <property type="resolution" value="1.34 A"/>
    <property type="chains" value="I=60-72"/>
</dbReference>
<dbReference type="PDB" id="3RM2">
    <property type="method" value="X-ray"/>
    <property type="resolution" value="1.23 A"/>
    <property type="chains" value="I=60-72"/>
</dbReference>
<dbReference type="PDB" id="3RML">
    <property type="method" value="X-ray"/>
    <property type="resolution" value="1.53 A"/>
    <property type="chains" value="I=60-72"/>
</dbReference>
<dbReference type="PDB" id="3RMM">
    <property type="method" value="X-ray"/>
    <property type="resolution" value="1.58 A"/>
    <property type="chains" value="I=60-72"/>
</dbReference>
<dbReference type="PDB" id="3RMN">
    <property type="method" value="X-ray"/>
    <property type="resolution" value="1.78 A"/>
    <property type="chains" value="I=60-72"/>
</dbReference>
<dbReference type="PDB" id="3RMO">
    <property type="method" value="X-ray"/>
    <property type="resolution" value="1.40 A"/>
    <property type="chains" value="I=60-72"/>
</dbReference>
<dbReference type="PDB" id="3SHA">
    <property type="method" value="X-ray"/>
    <property type="resolution" value="1.52 A"/>
    <property type="chains" value="I=60-72"/>
</dbReference>
<dbReference type="PDB" id="3SHC">
    <property type="method" value="X-ray"/>
    <property type="resolution" value="1.90 A"/>
    <property type="chains" value="I=60-72"/>
</dbReference>
<dbReference type="PDB" id="3SI3">
    <property type="method" value="X-ray"/>
    <property type="resolution" value="1.55 A"/>
    <property type="chains" value="I=60-72"/>
</dbReference>
<dbReference type="PDB" id="3SI4">
    <property type="method" value="X-ray"/>
    <property type="resolution" value="1.27 A"/>
    <property type="chains" value="I=60-72"/>
</dbReference>
<dbReference type="PDB" id="3SV2">
    <property type="method" value="X-ray"/>
    <property type="resolution" value="1.30 A"/>
    <property type="chains" value="I=60-72"/>
</dbReference>
<dbReference type="PDB" id="3T5F">
    <property type="method" value="X-ray"/>
    <property type="resolution" value="1.45 A"/>
    <property type="chains" value="I=60-72"/>
</dbReference>
<dbReference type="PDB" id="3TU7">
    <property type="method" value="X-ray"/>
    <property type="resolution" value="2.49 A"/>
    <property type="chains" value="I=61-72"/>
</dbReference>
<dbReference type="PDB" id="3U98">
    <property type="method" value="X-ray"/>
    <property type="resolution" value="1.45 A"/>
    <property type="chains" value="I=60-72"/>
</dbReference>
<dbReference type="PDB" id="3U9A">
    <property type="method" value="X-ray"/>
    <property type="resolution" value="1.58 A"/>
    <property type="chains" value="I=60-72"/>
</dbReference>
<dbReference type="PDB" id="3UWJ">
    <property type="method" value="X-ray"/>
    <property type="resolution" value="1.50 A"/>
    <property type="chains" value="I=60-72"/>
</dbReference>
<dbReference type="PDB" id="4BAO">
    <property type="method" value="X-ray"/>
    <property type="resolution" value="1.87 A"/>
    <property type="chains" value="D=62-71"/>
</dbReference>
<dbReference type="PDB" id="4E7R">
    <property type="method" value="X-ray"/>
    <property type="resolution" value="2.25 A"/>
    <property type="chains" value="I/J=62-72"/>
</dbReference>
<dbReference type="PDB" id="4HTC">
    <property type="method" value="X-ray"/>
    <property type="resolution" value="2.30 A"/>
    <property type="chains" value="I=8-72"/>
</dbReference>
<dbReference type="PDB" id="4LOY">
    <property type="method" value="X-ray"/>
    <property type="resolution" value="1.77 A"/>
    <property type="chains" value="I=62-71"/>
</dbReference>
<dbReference type="PDB" id="4UD9">
    <property type="method" value="X-ray"/>
    <property type="resolution" value="1.12 A"/>
    <property type="chains" value="I=61-72"/>
</dbReference>
<dbReference type="PDB" id="4UDW">
    <property type="method" value="X-ray"/>
    <property type="resolution" value="1.16 A"/>
    <property type="chains" value="I=62-72"/>
</dbReference>
<dbReference type="PDB" id="4UE7">
    <property type="method" value="X-ray"/>
    <property type="resolution" value="1.13 A"/>
    <property type="chains" value="I=61-72"/>
</dbReference>
<dbReference type="PDB" id="4UEH">
    <property type="method" value="X-ray"/>
    <property type="resolution" value="1.16 A"/>
    <property type="chains" value="I=61-72"/>
</dbReference>
<dbReference type="PDB" id="4UFD">
    <property type="method" value="X-ray"/>
    <property type="resolution" value="1.43 A"/>
    <property type="chains" value="I=61-72"/>
</dbReference>
<dbReference type="PDB" id="4UFE">
    <property type="method" value="X-ray"/>
    <property type="resolution" value="1.59 A"/>
    <property type="chains" value="I=61-72"/>
</dbReference>
<dbReference type="PDB" id="4UFF">
    <property type="method" value="X-ray"/>
    <property type="resolution" value="1.55 A"/>
    <property type="chains" value="I=61-72"/>
</dbReference>
<dbReference type="PDB" id="4UFG">
    <property type="method" value="X-ray"/>
    <property type="resolution" value="1.65 A"/>
    <property type="chains" value="I=61-72"/>
</dbReference>
<dbReference type="PDB" id="5A2M">
    <property type="method" value="X-ray"/>
    <property type="resolution" value="1.40 A"/>
    <property type="chains" value="I=61-72"/>
</dbReference>
<dbReference type="PDB" id="5AF9">
    <property type="method" value="X-ray"/>
    <property type="resolution" value="1.18 A"/>
    <property type="chains" value="I=61-72"/>
</dbReference>
<dbReference type="PDB" id="5JFD">
    <property type="method" value="X-ray"/>
    <property type="resolution" value="1.46 A"/>
    <property type="chains" value="I=61-72"/>
</dbReference>
<dbReference type="PDB" id="5JZY">
    <property type="method" value="X-ray"/>
    <property type="resolution" value="1.27 A"/>
    <property type="chains" value="I=61-72"/>
</dbReference>
<dbReference type="PDB" id="5LCE">
    <property type="method" value="X-ray"/>
    <property type="resolution" value="1.39 A"/>
    <property type="chains" value="I=61-72"/>
</dbReference>
<dbReference type="PDB" id="5LPD">
    <property type="method" value="X-ray"/>
    <property type="resolution" value="1.50 A"/>
    <property type="chains" value="I=61-72"/>
</dbReference>
<dbReference type="PDB" id="5MJT">
    <property type="method" value="X-ray"/>
    <property type="resolution" value="1.40 A"/>
    <property type="chains" value="D=61-72"/>
</dbReference>
<dbReference type="PDB" id="5MLS">
    <property type="method" value="X-ray"/>
    <property type="resolution" value="1.62 A"/>
    <property type="chains" value="D=61-72"/>
</dbReference>
<dbReference type="PDB" id="5MM6">
    <property type="method" value="X-ray"/>
    <property type="resolution" value="1.29 A"/>
    <property type="chains" value="I=61-72"/>
</dbReference>
<dbReference type="PDB" id="6EO8">
    <property type="method" value="X-ray"/>
    <property type="resolution" value="1.94 A"/>
    <property type="chains" value="I=60-71"/>
</dbReference>
<dbReference type="PDB" id="6EO9">
    <property type="method" value="X-ray"/>
    <property type="resolution" value="1.84 A"/>
    <property type="chains" value="I=60-71"/>
</dbReference>
<dbReference type="PDB" id="6GBW">
    <property type="method" value="X-ray"/>
    <property type="resolution" value="1.45 A"/>
    <property type="chains" value="I=61-72"/>
</dbReference>
<dbReference type="PDB" id="6HSX">
    <property type="method" value="X-ray"/>
    <property type="resolution" value="1.56 A"/>
    <property type="chains" value="I=62-72"/>
</dbReference>
<dbReference type="PDB" id="6I51">
    <property type="method" value="X-ray"/>
    <property type="resolution" value="1.40 A"/>
    <property type="chains" value="I=61-72"/>
</dbReference>
<dbReference type="PDB" id="6ROT">
    <property type="method" value="X-ray"/>
    <property type="resolution" value="1.34 A"/>
    <property type="chains" value="A=61-72"/>
</dbReference>
<dbReference type="PDB" id="6T3M">
    <property type="method" value="X-ray"/>
    <property type="resolution" value="1.38 A"/>
    <property type="chains" value="I=62-72"/>
</dbReference>
<dbReference type="PDB" id="6T3Q">
    <property type="method" value="X-ray"/>
    <property type="resolution" value="1.33 A"/>
    <property type="chains" value="I=62-72"/>
</dbReference>
<dbReference type="PDB" id="6T4A">
    <property type="method" value="X-ray"/>
    <property type="resolution" value="1.31 A"/>
    <property type="chains" value="I=62-72"/>
</dbReference>
<dbReference type="PDB" id="6T52">
    <property type="method" value="X-ray"/>
    <property type="resolution" value="1.45 A"/>
    <property type="chains" value="I=62-72"/>
</dbReference>
<dbReference type="PDB" id="6T53">
    <property type="method" value="X-ray"/>
    <property type="resolution" value="1.35 A"/>
    <property type="chains" value="I=62-72"/>
</dbReference>
<dbReference type="PDB" id="6T54">
    <property type="method" value="X-ray"/>
    <property type="resolution" value="1.57 A"/>
    <property type="chains" value="I=62-72"/>
</dbReference>
<dbReference type="PDB" id="6T55">
    <property type="method" value="X-ray"/>
    <property type="resolution" value="1.39 A"/>
    <property type="chains" value="I=62-72"/>
</dbReference>
<dbReference type="PDB" id="6T56">
    <property type="method" value="X-ray"/>
    <property type="resolution" value="1.31 A"/>
    <property type="chains" value="I=62-72"/>
</dbReference>
<dbReference type="PDB" id="6T57">
    <property type="method" value="X-ray"/>
    <property type="resolution" value="1.57 A"/>
    <property type="chains" value="I=62-72"/>
</dbReference>
<dbReference type="PDB" id="6T89">
    <property type="method" value="X-ray"/>
    <property type="resolution" value="2.00 A"/>
    <property type="chains" value="I=61-72"/>
</dbReference>
<dbReference type="PDB" id="6T8A">
    <property type="method" value="X-ray"/>
    <property type="resolution" value="1.62 A"/>
    <property type="chains" value="I=62-72"/>
</dbReference>
<dbReference type="PDB" id="6TDT">
    <property type="method" value="X-ray"/>
    <property type="resolution" value="1.53 A"/>
    <property type="chains" value="I=62-72"/>
</dbReference>
<dbReference type="PDB" id="6Y02">
    <property type="method" value="X-ray"/>
    <property type="resolution" value="1.48 A"/>
    <property type="chains" value="C=61-72"/>
</dbReference>
<dbReference type="PDB" id="6Y9H">
    <property type="method" value="X-ray"/>
    <property type="resolution" value="1.48 A"/>
    <property type="chains" value="I=61-72"/>
</dbReference>
<dbReference type="PDB" id="6YB6">
    <property type="method" value="X-ray"/>
    <property type="resolution" value="1.33 A"/>
    <property type="chains" value="I=61-72"/>
</dbReference>
<dbReference type="PDB" id="6YHG">
    <property type="method" value="X-ray"/>
    <property type="resolution" value="1.33 A"/>
    <property type="chains" value="I=61-72"/>
</dbReference>
<dbReference type="PDB" id="6YHJ">
    <property type="method" value="X-ray"/>
    <property type="resolution" value="1.44 A"/>
    <property type="chains" value="I=61-72"/>
</dbReference>
<dbReference type="PDB" id="6YMP">
    <property type="method" value="X-ray"/>
    <property type="resolution" value="1.42 A"/>
    <property type="chains" value="I=61-72"/>
</dbReference>
<dbReference type="PDB" id="6YN3">
    <property type="method" value="X-ray"/>
    <property type="resolution" value="1.49 A"/>
    <property type="chains" value="I=61-72"/>
</dbReference>
<dbReference type="PDB" id="6YQV">
    <property type="method" value="X-ray"/>
    <property type="resolution" value="1.45 A"/>
    <property type="chains" value="I=61-72"/>
</dbReference>
<dbReference type="PDB" id="6YSJ">
    <property type="method" value="X-ray"/>
    <property type="resolution" value="1.45 A"/>
    <property type="chains" value="I=61-72"/>
</dbReference>
<dbReference type="PDB" id="6YSX">
    <property type="method" value="X-ray"/>
    <property type="resolution" value="1.48 A"/>
    <property type="chains" value="I=61-72"/>
</dbReference>
<dbReference type="PDB" id="6ZGO">
    <property type="method" value="X-ray"/>
    <property type="resolution" value="1.79 A"/>
    <property type="chains" value="I=61-72"/>
</dbReference>
<dbReference type="PDB" id="7AC9">
    <property type="method" value="X-ray"/>
    <property type="resolution" value="1.39 A"/>
    <property type="chains" value="I=61-72"/>
</dbReference>
<dbReference type="PDB" id="8EF4">
    <property type="method" value="NMR"/>
    <property type="chains" value="A=53-71"/>
</dbReference>
<dbReference type="PDBsum" id="1A2C"/>
<dbReference type="PDBsum" id="1A46"/>
<dbReference type="PDBsum" id="1A4W"/>
<dbReference type="PDBsum" id="1A5G"/>
<dbReference type="PDBsum" id="1A61"/>
<dbReference type="PDBsum" id="1B5G"/>
<dbReference type="PDBsum" id="1DOJ"/>
<dbReference type="PDBsum" id="1K21"/>
<dbReference type="PDBsum" id="1K22"/>
<dbReference type="PDBsum" id="1NRS"/>
<dbReference type="PDBsum" id="1TMB"/>
<dbReference type="PDBsum" id="1TMU"/>
<dbReference type="PDBsum" id="1VZQ"/>
<dbReference type="PDBsum" id="1W7G"/>
<dbReference type="PDBsum" id="1WAY"/>
<dbReference type="PDBsum" id="2BVR"/>
<dbReference type="PDBsum" id="2BVS"/>
<dbReference type="PDBsum" id="2BVX"/>
<dbReference type="PDBsum" id="2BXT"/>
<dbReference type="PDBsum" id="2BXU"/>
<dbReference type="PDBsum" id="2C8W"/>
<dbReference type="PDBsum" id="2C8X"/>
<dbReference type="PDBsum" id="2C8Y"/>
<dbReference type="PDBsum" id="2C8Z"/>
<dbReference type="PDBsum" id="2C90"/>
<dbReference type="PDBsum" id="2C93"/>
<dbReference type="PDBsum" id="2R2M"/>
<dbReference type="PDBsum" id="2ZFQ"/>
<dbReference type="PDBsum" id="2ZFR"/>
<dbReference type="PDBsum" id="2ZG0"/>
<dbReference type="PDBsum" id="2ZHE"/>
<dbReference type="PDBsum" id="2ZHF"/>
<dbReference type="PDBsum" id="2ZHW"/>
<dbReference type="PDBsum" id="3BIU"/>
<dbReference type="PDBsum" id="3BIV"/>
<dbReference type="PDBsum" id="3F68"/>
<dbReference type="PDBsum" id="3HAT"/>
<dbReference type="PDBsum" id="3HTC"/>
<dbReference type="PDBsum" id="3P17"/>
<dbReference type="PDBsum" id="3QTO"/>
<dbReference type="PDBsum" id="3QTV"/>
<dbReference type="PDBsum" id="3QWC"/>
<dbReference type="PDBsum" id="3QX5"/>
<dbReference type="PDBsum" id="3RLW"/>
<dbReference type="PDBsum" id="3RLY"/>
<dbReference type="PDBsum" id="3RM0"/>
<dbReference type="PDBsum" id="3RM2"/>
<dbReference type="PDBsum" id="3RML"/>
<dbReference type="PDBsum" id="3RMM"/>
<dbReference type="PDBsum" id="3RMN"/>
<dbReference type="PDBsum" id="3RMO"/>
<dbReference type="PDBsum" id="3SHA"/>
<dbReference type="PDBsum" id="3SHC"/>
<dbReference type="PDBsum" id="3SI3"/>
<dbReference type="PDBsum" id="3SI4"/>
<dbReference type="PDBsum" id="3SV2"/>
<dbReference type="PDBsum" id="3T5F"/>
<dbReference type="PDBsum" id="3TU7"/>
<dbReference type="PDBsum" id="3U98"/>
<dbReference type="PDBsum" id="3U9A"/>
<dbReference type="PDBsum" id="3UWJ"/>
<dbReference type="PDBsum" id="4BAO"/>
<dbReference type="PDBsum" id="4E7R"/>
<dbReference type="PDBsum" id="4HTC"/>
<dbReference type="PDBsum" id="4LOY"/>
<dbReference type="PDBsum" id="4UD9"/>
<dbReference type="PDBsum" id="4UDW"/>
<dbReference type="PDBsum" id="4UE7"/>
<dbReference type="PDBsum" id="4UEH"/>
<dbReference type="PDBsum" id="4UFD"/>
<dbReference type="PDBsum" id="4UFE"/>
<dbReference type="PDBsum" id="4UFF"/>
<dbReference type="PDBsum" id="4UFG"/>
<dbReference type="PDBsum" id="5A2M"/>
<dbReference type="PDBsum" id="5AF9"/>
<dbReference type="PDBsum" id="5JFD"/>
<dbReference type="PDBsum" id="5JZY"/>
<dbReference type="PDBsum" id="5LCE"/>
<dbReference type="PDBsum" id="5LPD"/>
<dbReference type="PDBsum" id="5MJT"/>
<dbReference type="PDBsum" id="5MLS"/>
<dbReference type="PDBsum" id="5MM6"/>
<dbReference type="PDBsum" id="6EO8"/>
<dbReference type="PDBsum" id="6EO9"/>
<dbReference type="PDBsum" id="6GBW"/>
<dbReference type="PDBsum" id="6HSX"/>
<dbReference type="PDBsum" id="6I51"/>
<dbReference type="PDBsum" id="6ROT"/>
<dbReference type="PDBsum" id="6T3M"/>
<dbReference type="PDBsum" id="6T3Q"/>
<dbReference type="PDBsum" id="6T4A"/>
<dbReference type="PDBsum" id="6T52"/>
<dbReference type="PDBsum" id="6T53"/>
<dbReference type="PDBsum" id="6T54"/>
<dbReference type="PDBsum" id="6T55"/>
<dbReference type="PDBsum" id="6T56"/>
<dbReference type="PDBsum" id="6T57"/>
<dbReference type="PDBsum" id="6T89"/>
<dbReference type="PDBsum" id="6T8A"/>
<dbReference type="PDBsum" id="6TDT"/>
<dbReference type="PDBsum" id="6Y02"/>
<dbReference type="PDBsum" id="6Y9H"/>
<dbReference type="PDBsum" id="6YB6"/>
<dbReference type="PDBsum" id="6YHG"/>
<dbReference type="PDBsum" id="6YHJ"/>
<dbReference type="PDBsum" id="6YMP"/>
<dbReference type="PDBsum" id="6YN3"/>
<dbReference type="PDBsum" id="6YQV"/>
<dbReference type="PDBsum" id="6YSJ"/>
<dbReference type="PDBsum" id="6YSX"/>
<dbReference type="PDBsum" id="6ZGO"/>
<dbReference type="PDBsum" id="7AC9"/>
<dbReference type="PDBsum" id="8EF4"/>
<dbReference type="SMR" id="P09945"/>
<dbReference type="Allergome" id="9843">
    <property type="allergen name" value="Hir me Hirudin"/>
</dbReference>
<dbReference type="MEROPS" id="I14.001"/>
<dbReference type="EvolutionaryTrace" id="P09945"/>
<dbReference type="GO" id="GO:0005576">
    <property type="term" value="C:extracellular region"/>
    <property type="evidence" value="ECO:0007669"/>
    <property type="project" value="UniProtKB-SubCell"/>
</dbReference>
<dbReference type="GO" id="GO:0004867">
    <property type="term" value="F:serine-type endopeptidase inhibitor activity"/>
    <property type="evidence" value="ECO:0007669"/>
    <property type="project" value="UniProtKB-KW"/>
</dbReference>
<dbReference type="Gene3D" id="2.70.10.10">
    <property type="entry name" value="Thrombin Inhibitor (Hirudin), subunit I"/>
    <property type="match status" value="1"/>
</dbReference>
<dbReference type="InterPro" id="IPR024793">
    <property type="entry name" value="Hirudin"/>
</dbReference>
<dbReference type="InterPro" id="IPR011061">
    <property type="entry name" value="Hirudin/antistatin"/>
</dbReference>
<dbReference type="InterPro" id="IPR000429">
    <property type="entry name" value="Prot_inh_hirudin"/>
</dbReference>
<dbReference type="Pfam" id="PF00713">
    <property type="entry name" value="Hirudin"/>
    <property type="match status" value="1"/>
</dbReference>
<dbReference type="PIRSF" id="PIRSF001640">
    <property type="entry name" value="Hirudin"/>
    <property type="match status" value="1"/>
</dbReference>
<dbReference type="PRINTS" id="PR00777">
    <property type="entry name" value="HIRUDIN"/>
</dbReference>
<dbReference type="SUPFAM" id="SSF57262">
    <property type="entry name" value="Leech antihemostatic proteins"/>
    <property type="match status" value="1"/>
</dbReference>
<name>HIRV2_HIRME</name>
<comment type="function">
    <text>Hirudin is a potent thrombin-specific protease inhibitor. It forms a stable non-covalent complex with alpha-thrombin, thereby abolishing its ability to cleave fibrinogen.</text>
</comment>
<comment type="subcellular location">
    <subcellularLocation>
        <location>Secreted</location>
    </subcellularLocation>
</comment>
<comment type="similarity">
    <text evidence="5">Belongs to the protease inhibitor I14 (hirudin) family.</text>
</comment>
<evidence type="ECO:0000250" key="1"/>
<evidence type="ECO:0000256" key="2">
    <source>
        <dbReference type="SAM" id="MobiDB-lite"/>
    </source>
</evidence>
<evidence type="ECO:0000269" key="3">
    <source>
    </source>
</evidence>
<evidence type="ECO:0000269" key="4">
    <source>
    </source>
</evidence>
<evidence type="ECO:0000305" key="5"/>
<evidence type="ECO:0007829" key="6">
    <source>
        <dbReference type="PDB" id="4HTC"/>
    </source>
</evidence>
<evidence type="ECO:0007829" key="7">
    <source>
        <dbReference type="PDB" id="4UD9"/>
    </source>
</evidence>
<evidence type="ECO:0007829" key="8">
    <source>
        <dbReference type="PDB" id="8EF4"/>
    </source>
</evidence>
<keyword id="KW-0002">3D-structure</keyword>
<keyword id="KW-1015">Disulfide bond</keyword>
<keyword id="KW-0325">Glycoprotein</keyword>
<keyword id="KW-0646">Protease inhibitor</keyword>
<keyword id="KW-0964">Secreted</keyword>
<keyword id="KW-0722">Serine protease inhibitor</keyword>
<keyword id="KW-0732">Signal</keyword>
<keyword id="KW-0765">Sulfation</keyword>
<reference key="1">
    <citation type="journal article" date="1986" name="Proc. Natl. Acad. Sci. U.S.A.">
        <title>Cloning and expression of a cDNA coding for the anticoagulant hirudin from the bloodsucking leech, Hirudo medicinalis.</title>
        <authorList>
            <person name="Harvey R.P."/>
            <person name="Degryse E."/>
            <person name="Stefani L."/>
            <person name="Schamber F."/>
            <person name="Cazenave J.-P."/>
            <person name="Courtney M."/>
            <person name="Tolstoshev P."/>
            <person name="Lecocq J.-P."/>
        </authorList>
    </citation>
    <scope>NUCLEOTIDE SEQUENCE [MRNA]</scope>
    <scope>SULFATION AT TYR-70</scope>
</reference>
<reference key="2">
    <citation type="journal article" date="1990" name="Science">
        <title>The structure of a complex of recombinant hirudin and human alpha-thrombin.</title>
        <authorList>
            <person name="Rydel T.J."/>
            <person name="Ravichandran K.G."/>
            <person name="Tulinsky A."/>
            <person name="Bode W."/>
            <person name="Huber R."/>
            <person name="Roitsch C."/>
            <person name="Fenton J.W. II"/>
        </authorList>
    </citation>
    <scope>X-RAY CRYSTALLOGRAPHY (2.3 ANGSTROMS) OF 8-72 OF MUTANT LYS-54 IN COMPLEX WITH THROMBIN</scope>
    <scope>DISULFIDE BONDS</scope>
</reference>
<reference key="3">
    <citation type="journal article" date="1991" name="J. Mol. Biol.">
        <title>Refined structure of the hirudin-thrombin complex.</title>
        <authorList>
            <person name="Rydel T.J."/>
            <person name="Tulinsky A."/>
            <person name="Bode W."/>
            <person name="Huber R."/>
        </authorList>
    </citation>
    <scope>X-RAY CRYSTALLOGRAPHY (2.3 ANGSTROMS) OF 8-72 IN COMPLEX WITH THROMBIN</scope>
</reference>
<proteinExistence type="evidence at protein level"/>
<protein>
    <recommendedName>
        <fullName>Hirudin variant-2</fullName>
    </recommendedName>
</protein>
<feature type="signal peptide">
    <location>
        <begin position="1" status="less than"/>
        <end position="7"/>
    </location>
</feature>
<feature type="chain" id="PRO_0000013441" description="Hirudin variant-2">
    <location>
        <begin position="8"/>
        <end position="72"/>
    </location>
</feature>
<feature type="region of interest" description="Interaction with thrombin active site">
    <location>
        <begin position="8"/>
        <end position="10"/>
    </location>
</feature>
<feature type="region of interest" description="Disordered" evidence="2">
    <location>
        <begin position="47"/>
        <end position="72"/>
    </location>
</feature>
<feature type="region of interest" description="Interaction with fibrinogen-binding exosite of thrombin">
    <location>
        <begin position="62"/>
        <end position="72"/>
    </location>
</feature>
<feature type="compositionally biased region" description="Acidic residues" evidence="2">
    <location>
        <begin position="62"/>
        <end position="72"/>
    </location>
</feature>
<feature type="modified residue" description="Sulfotyrosine" evidence="4">
    <location>
        <position position="70"/>
    </location>
</feature>
<feature type="glycosylation site" description="O-linked (GalNAc...) threonine" evidence="1">
    <location>
        <position position="52"/>
    </location>
</feature>
<feature type="disulfide bond" evidence="3">
    <location>
        <begin position="13"/>
        <end position="21"/>
    </location>
</feature>
<feature type="disulfide bond" evidence="3">
    <location>
        <begin position="23"/>
        <end position="35"/>
    </location>
</feature>
<feature type="disulfide bond" evidence="3">
    <location>
        <begin position="29"/>
        <end position="46"/>
    </location>
</feature>
<feature type="non-terminal residue">
    <location>
        <position position="1"/>
    </location>
</feature>
<feature type="strand" evidence="6">
    <location>
        <begin position="18"/>
        <end position="22"/>
    </location>
</feature>
<feature type="strand" evidence="6">
    <location>
        <begin position="24"/>
        <end position="26"/>
    </location>
</feature>
<feature type="strand" evidence="6">
    <location>
        <begin position="33"/>
        <end position="36"/>
    </location>
</feature>
<feature type="strand" evidence="6">
    <location>
        <begin position="45"/>
        <end position="49"/>
    </location>
</feature>
<feature type="strand" evidence="8">
    <location>
        <begin position="57"/>
        <end position="61"/>
    </location>
</feature>
<feature type="helix" evidence="7">
    <location>
        <begin position="68"/>
        <end position="70"/>
    </location>
</feature>
<organism>
    <name type="scientific">Hirudo medicinalis</name>
    <name type="common">Medicinal leech</name>
    <dbReference type="NCBI Taxonomy" id="6421"/>
    <lineage>
        <taxon>Eukaryota</taxon>
        <taxon>Metazoa</taxon>
        <taxon>Spiralia</taxon>
        <taxon>Lophotrochozoa</taxon>
        <taxon>Annelida</taxon>
        <taxon>Clitellata</taxon>
        <taxon>Hirudinea</taxon>
        <taxon>Hirudinida</taxon>
        <taxon>Hirudiniformes</taxon>
        <taxon>Hirudinidae</taxon>
        <taxon>Hirudo</taxon>
    </lineage>
</organism>
<accession>P09945</accession>
<sequence length="72" mass="7571">AICVSQAITYTDCTESGQNLCLCEGSNVCGKGNKCILGSNGKGNQCVTGEGTPNPESHNNGDFEEIPEEYLQ</sequence>